<proteinExistence type="inferred from homology"/>
<accession>B2TTU9</accession>
<keyword id="KW-0227">DNA damage</keyword>
<keyword id="KW-0234">DNA repair</keyword>
<keyword id="KW-0238">DNA-binding</keyword>
<keyword id="KW-0326">Glycosidase</keyword>
<keyword id="KW-0378">Hydrolase</keyword>
<keyword id="KW-0456">Lyase</keyword>
<keyword id="KW-0479">Metal-binding</keyword>
<keyword id="KW-0511">Multifunctional enzyme</keyword>
<keyword id="KW-1185">Reference proteome</keyword>
<keyword id="KW-0862">Zinc</keyword>
<keyword id="KW-0863">Zinc-finger</keyword>
<name>FPG_SHIB3</name>
<dbReference type="EC" id="3.2.2.23" evidence="2"/>
<dbReference type="EC" id="4.2.99.18" evidence="2"/>
<dbReference type="EMBL" id="CP001063">
    <property type="protein sequence ID" value="ACD07589.1"/>
    <property type="molecule type" value="Genomic_DNA"/>
</dbReference>
<dbReference type="RefSeq" id="WP_001114533.1">
    <property type="nucleotide sequence ID" value="NC_010658.1"/>
</dbReference>
<dbReference type="SMR" id="B2TTU9"/>
<dbReference type="STRING" id="344609.SbBS512_E4060"/>
<dbReference type="GeneID" id="93778348"/>
<dbReference type="KEGG" id="sbc:SbBS512_E4060"/>
<dbReference type="HOGENOM" id="CLU_038423_1_1_6"/>
<dbReference type="Proteomes" id="UP000001030">
    <property type="component" value="Chromosome"/>
</dbReference>
<dbReference type="GO" id="GO:0034039">
    <property type="term" value="F:8-oxo-7,8-dihydroguanine DNA N-glycosylase activity"/>
    <property type="evidence" value="ECO:0007669"/>
    <property type="project" value="TreeGrafter"/>
</dbReference>
<dbReference type="GO" id="GO:0140078">
    <property type="term" value="F:class I DNA-(apurinic or apyrimidinic site) endonuclease activity"/>
    <property type="evidence" value="ECO:0007669"/>
    <property type="project" value="UniProtKB-EC"/>
</dbReference>
<dbReference type="GO" id="GO:0003684">
    <property type="term" value="F:damaged DNA binding"/>
    <property type="evidence" value="ECO:0007669"/>
    <property type="project" value="InterPro"/>
</dbReference>
<dbReference type="GO" id="GO:0008270">
    <property type="term" value="F:zinc ion binding"/>
    <property type="evidence" value="ECO:0007669"/>
    <property type="project" value="UniProtKB-UniRule"/>
</dbReference>
<dbReference type="GO" id="GO:0006284">
    <property type="term" value="P:base-excision repair"/>
    <property type="evidence" value="ECO:0007669"/>
    <property type="project" value="InterPro"/>
</dbReference>
<dbReference type="CDD" id="cd08966">
    <property type="entry name" value="EcFpg-like_N"/>
    <property type="match status" value="1"/>
</dbReference>
<dbReference type="FunFam" id="1.10.8.50:FF:000003">
    <property type="entry name" value="Formamidopyrimidine-DNA glycosylase"/>
    <property type="match status" value="1"/>
</dbReference>
<dbReference type="FunFam" id="3.20.190.10:FF:000001">
    <property type="entry name" value="Formamidopyrimidine-DNA glycosylase"/>
    <property type="match status" value="1"/>
</dbReference>
<dbReference type="Gene3D" id="1.10.8.50">
    <property type="match status" value="1"/>
</dbReference>
<dbReference type="Gene3D" id="3.20.190.10">
    <property type="entry name" value="MutM-like, N-terminal"/>
    <property type="match status" value="1"/>
</dbReference>
<dbReference type="HAMAP" id="MF_00103">
    <property type="entry name" value="Fapy_DNA_glycosyl"/>
    <property type="match status" value="1"/>
</dbReference>
<dbReference type="InterPro" id="IPR015886">
    <property type="entry name" value="DNA_glyclase/AP_lyase_DNA-bd"/>
</dbReference>
<dbReference type="InterPro" id="IPR015887">
    <property type="entry name" value="DNA_glyclase_Znf_dom_DNA_BS"/>
</dbReference>
<dbReference type="InterPro" id="IPR020629">
    <property type="entry name" value="Formamido-pyr_DNA_Glyclase"/>
</dbReference>
<dbReference type="InterPro" id="IPR012319">
    <property type="entry name" value="FPG_cat"/>
</dbReference>
<dbReference type="InterPro" id="IPR035937">
    <property type="entry name" value="MutM-like_N-ter"/>
</dbReference>
<dbReference type="InterPro" id="IPR010979">
    <property type="entry name" value="Ribosomal_uS13-like_H2TH"/>
</dbReference>
<dbReference type="InterPro" id="IPR000214">
    <property type="entry name" value="Znf_DNA_glyclase/AP_lyase"/>
</dbReference>
<dbReference type="InterPro" id="IPR010663">
    <property type="entry name" value="Znf_FPG/IleRS"/>
</dbReference>
<dbReference type="NCBIfam" id="TIGR00577">
    <property type="entry name" value="fpg"/>
    <property type="match status" value="1"/>
</dbReference>
<dbReference type="NCBIfam" id="NF002211">
    <property type="entry name" value="PRK01103.1"/>
    <property type="match status" value="1"/>
</dbReference>
<dbReference type="PANTHER" id="PTHR22993">
    <property type="entry name" value="FORMAMIDOPYRIMIDINE-DNA GLYCOSYLASE"/>
    <property type="match status" value="1"/>
</dbReference>
<dbReference type="PANTHER" id="PTHR22993:SF9">
    <property type="entry name" value="FORMAMIDOPYRIMIDINE-DNA GLYCOSYLASE"/>
    <property type="match status" value="1"/>
</dbReference>
<dbReference type="Pfam" id="PF01149">
    <property type="entry name" value="Fapy_DNA_glyco"/>
    <property type="match status" value="1"/>
</dbReference>
<dbReference type="Pfam" id="PF06831">
    <property type="entry name" value="H2TH"/>
    <property type="match status" value="1"/>
</dbReference>
<dbReference type="Pfam" id="PF06827">
    <property type="entry name" value="zf-FPG_IleRS"/>
    <property type="match status" value="1"/>
</dbReference>
<dbReference type="SMART" id="SM00898">
    <property type="entry name" value="Fapy_DNA_glyco"/>
    <property type="match status" value="1"/>
</dbReference>
<dbReference type="SMART" id="SM01232">
    <property type="entry name" value="H2TH"/>
    <property type="match status" value="1"/>
</dbReference>
<dbReference type="SUPFAM" id="SSF57716">
    <property type="entry name" value="Glucocorticoid receptor-like (DNA-binding domain)"/>
    <property type="match status" value="1"/>
</dbReference>
<dbReference type="SUPFAM" id="SSF81624">
    <property type="entry name" value="N-terminal domain of MutM-like DNA repair proteins"/>
    <property type="match status" value="1"/>
</dbReference>
<dbReference type="SUPFAM" id="SSF46946">
    <property type="entry name" value="S13-like H2TH domain"/>
    <property type="match status" value="1"/>
</dbReference>
<dbReference type="PROSITE" id="PS51068">
    <property type="entry name" value="FPG_CAT"/>
    <property type="match status" value="1"/>
</dbReference>
<dbReference type="PROSITE" id="PS01242">
    <property type="entry name" value="ZF_FPG_1"/>
    <property type="match status" value="1"/>
</dbReference>
<dbReference type="PROSITE" id="PS51066">
    <property type="entry name" value="ZF_FPG_2"/>
    <property type="match status" value="1"/>
</dbReference>
<organism>
    <name type="scientific">Shigella boydii serotype 18 (strain CDC 3083-94 / BS512)</name>
    <dbReference type="NCBI Taxonomy" id="344609"/>
    <lineage>
        <taxon>Bacteria</taxon>
        <taxon>Pseudomonadati</taxon>
        <taxon>Pseudomonadota</taxon>
        <taxon>Gammaproteobacteria</taxon>
        <taxon>Enterobacterales</taxon>
        <taxon>Enterobacteriaceae</taxon>
        <taxon>Shigella</taxon>
    </lineage>
</organism>
<gene>
    <name evidence="2" type="primary">mutM</name>
    <name evidence="2" type="synonym">fpg</name>
    <name type="ordered locus">SbBS512_E4060</name>
</gene>
<reference key="1">
    <citation type="submission" date="2008-05" db="EMBL/GenBank/DDBJ databases">
        <title>Complete sequence of Shigella boydii serotype 18 strain BS512.</title>
        <authorList>
            <person name="Rasko D.A."/>
            <person name="Rosovitz M."/>
            <person name="Maurelli A.T."/>
            <person name="Myers G."/>
            <person name="Seshadri R."/>
            <person name="Cer R."/>
            <person name="Jiang L."/>
            <person name="Ravel J."/>
            <person name="Sebastian Y."/>
        </authorList>
    </citation>
    <scope>NUCLEOTIDE SEQUENCE [LARGE SCALE GENOMIC DNA]</scope>
    <source>
        <strain>CDC 3083-94 / BS512</strain>
    </source>
</reference>
<protein>
    <recommendedName>
        <fullName evidence="2">Formamidopyrimidine-DNA glycosylase</fullName>
        <shortName evidence="2">Fapy-DNA glycosylase</shortName>
        <ecNumber evidence="2">3.2.2.23</ecNumber>
    </recommendedName>
    <alternativeName>
        <fullName evidence="2">DNA-(apurinic or apyrimidinic site) lyase MutM</fullName>
        <shortName evidence="2">AP lyase MutM</shortName>
        <ecNumber evidence="2">4.2.99.18</ecNumber>
    </alternativeName>
</protein>
<evidence type="ECO:0000250" key="1"/>
<evidence type="ECO:0000255" key="2">
    <source>
        <dbReference type="HAMAP-Rule" id="MF_00103"/>
    </source>
</evidence>
<comment type="function">
    <text evidence="2">Involved in base excision repair of DNA damaged by oxidation or by mutagenic agents. Acts as a DNA glycosylase that recognizes and removes damaged bases. Has a preference for oxidized purines, such as 7,8-dihydro-8-oxoguanine (8-oxoG). Has AP (apurinic/apyrimidinic) lyase activity and introduces nicks in the DNA strand. Cleaves the DNA backbone by beta-delta elimination to generate a single-strand break at the site of the removed base with both 3'- and 5'-phosphates.</text>
</comment>
<comment type="catalytic activity">
    <reaction evidence="2">
        <text>Hydrolysis of DNA containing ring-opened 7-methylguanine residues, releasing 2,6-diamino-4-hydroxy-5-(N-methyl)formamidopyrimidine.</text>
        <dbReference type="EC" id="3.2.2.23"/>
    </reaction>
</comment>
<comment type="catalytic activity">
    <reaction evidence="2">
        <text>2'-deoxyribonucleotide-(2'-deoxyribose 5'-phosphate)-2'-deoxyribonucleotide-DNA = a 3'-end 2'-deoxyribonucleotide-(2,3-dehydro-2,3-deoxyribose 5'-phosphate)-DNA + a 5'-end 5'-phospho-2'-deoxyribonucleoside-DNA + H(+)</text>
        <dbReference type="Rhea" id="RHEA:66592"/>
        <dbReference type="Rhea" id="RHEA-COMP:13180"/>
        <dbReference type="Rhea" id="RHEA-COMP:16897"/>
        <dbReference type="Rhea" id="RHEA-COMP:17067"/>
        <dbReference type="ChEBI" id="CHEBI:15378"/>
        <dbReference type="ChEBI" id="CHEBI:136412"/>
        <dbReference type="ChEBI" id="CHEBI:157695"/>
        <dbReference type="ChEBI" id="CHEBI:167181"/>
        <dbReference type="EC" id="4.2.99.18"/>
    </reaction>
</comment>
<comment type="cofactor">
    <cofactor evidence="2">
        <name>Zn(2+)</name>
        <dbReference type="ChEBI" id="CHEBI:29105"/>
    </cofactor>
    <text evidence="2">Binds 1 zinc ion per subunit.</text>
</comment>
<comment type="subunit">
    <text evidence="2">Monomer.</text>
</comment>
<comment type="similarity">
    <text evidence="2">Belongs to the FPG family.</text>
</comment>
<sequence length="269" mass="30260">MPELPEVETSRRGIEPHLVGATILHAVVRNGRLRWPVSEEIYRLSDQPVLSVQRRAKYLLLELPEGWIIIHLGMSGSLRILPEELPPEKHDHVDLVMSNGKVLRYTDPRRFGAWLWTKELEGHNVLAHLGPEPLSDDFNGEYLHQKCAKKKTAIKPWLMDNKLVVGVGNIYASESLFAAGIHPDRLASSLSLAECELLARVIKAVLLRSIEQGGTTLKDFLQSDGKPGYFAQELQVYGRKGEPCRVCGTPIVATKHAQRATFYCRQCQK</sequence>
<feature type="initiator methionine" description="Removed" evidence="1">
    <location>
        <position position="1"/>
    </location>
</feature>
<feature type="chain" id="PRO_1000094079" description="Formamidopyrimidine-DNA glycosylase">
    <location>
        <begin position="2"/>
        <end position="269"/>
    </location>
</feature>
<feature type="zinc finger region" description="FPG-type" evidence="2">
    <location>
        <begin position="235"/>
        <end position="269"/>
    </location>
</feature>
<feature type="active site" description="Schiff-base intermediate with DNA" evidence="2">
    <location>
        <position position="2"/>
    </location>
</feature>
<feature type="active site" description="Proton donor" evidence="2">
    <location>
        <position position="3"/>
    </location>
</feature>
<feature type="active site" description="Proton donor; for beta-elimination activity" evidence="2">
    <location>
        <position position="57"/>
    </location>
</feature>
<feature type="active site" description="Proton donor; for delta-elimination activity" evidence="2">
    <location>
        <position position="259"/>
    </location>
</feature>
<feature type="binding site" evidence="2">
    <location>
        <position position="90"/>
    </location>
    <ligand>
        <name>DNA</name>
        <dbReference type="ChEBI" id="CHEBI:16991"/>
    </ligand>
</feature>
<feature type="binding site" evidence="2">
    <location>
        <position position="109"/>
    </location>
    <ligand>
        <name>DNA</name>
        <dbReference type="ChEBI" id="CHEBI:16991"/>
    </ligand>
</feature>
<feature type="binding site" evidence="2">
    <location>
        <position position="150"/>
    </location>
    <ligand>
        <name>DNA</name>
        <dbReference type="ChEBI" id="CHEBI:16991"/>
    </ligand>
</feature>